<dbReference type="EC" id="5.4.99.25" evidence="1"/>
<dbReference type="EMBL" id="AE015928">
    <property type="protein sequence ID" value="AAO78319.1"/>
    <property type="molecule type" value="Genomic_DNA"/>
</dbReference>
<dbReference type="RefSeq" id="NP_812125.1">
    <property type="nucleotide sequence ID" value="NC_004663.1"/>
</dbReference>
<dbReference type="RefSeq" id="WP_008762820.1">
    <property type="nucleotide sequence ID" value="NZ_UYXG01000003.1"/>
</dbReference>
<dbReference type="SMR" id="Q8A2U2"/>
<dbReference type="FunCoup" id="Q8A2U2">
    <property type="interactions" value="483"/>
</dbReference>
<dbReference type="STRING" id="226186.BT_3213"/>
<dbReference type="PaxDb" id="226186-BT_3213"/>
<dbReference type="EnsemblBacteria" id="AAO78319">
    <property type="protein sequence ID" value="AAO78319"/>
    <property type="gene ID" value="BT_3213"/>
</dbReference>
<dbReference type="GeneID" id="60924392"/>
<dbReference type="KEGG" id="bth:BT_3213"/>
<dbReference type="PATRIC" id="fig|226186.12.peg.3276"/>
<dbReference type="eggNOG" id="COG0130">
    <property type="taxonomic scope" value="Bacteria"/>
</dbReference>
<dbReference type="HOGENOM" id="CLU_032087_2_0_10"/>
<dbReference type="InParanoid" id="Q8A2U2"/>
<dbReference type="OrthoDB" id="9802309at2"/>
<dbReference type="Proteomes" id="UP000001414">
    <property type="component" value="Chromosome"/>
</dbReference>
<dbReference type="GO" id="GO:0009982">
    <property type="term" value="F:pseudouridine synthase activity"/>
    <property type="evidence" value="ECO:0000318"/>
    <property type="project" value="GO_Central"/>
</dbReference>
<dbReference type="GO" id="GO:0003723">
    <property type="term" value="F:RNA binding"/>
    <property type="evidence" value="ECO:0007669"/>
    <property type="project" value="InterPro"/>
</dbReference>
<dbReference type="GO" id="GO:0160148">
    <property type="term" value="F:tRNA pseudouridine(55) synthase activity"/>
    <property type="evidence" value="ECO:0007669"/>
    <property type="project" value="UniProtKB-EC"/>
</dbReference>
<dbReference type="GO" id="GO:1990481">
    <property type="term" value="P:mRNA pseudouridine synthesis"/>
    <property type="evidence" value="ECO:0000318"/>
    <property type="project" value="GO_Central"/>
</dbReference>
<dbReference type="GO" id="GO:0006400">
    <property type="term" value="P:tRNA modification"/>
    <property type="evidence" value="ECO:0000318"/>
    <property type="project" value="GO_Central"/>
</dbReference>
<dbReference type="GO" id="GO:0031119">
    <property type="term" value="P:tRNA pseudouridine synthesis"/>
    <property type="evidence" value="ECO:0007669"/>
    <property type="project" value="UniProtKB-UniRule"/>
</dbReference>
<dbReference type="CDD" id="cd02573">
    <property type="entry name" value="PseudoU_synth_EcTruB"/>
    <property type="match status" value="1"/>
</dbReference>
<dbReference type="FunFam" id="3.30.2350.10:FF:000018">
    <property type="entry name" value="tRNA pseudouridine synthase B"/>
    <property type="match status" value="1"/>
</dbReference>
<dbReference type="Gene3D" id="3.30.2350.10">
    <property type="entry name" value="Pseudouridine synthase"/>
    <property type="match status" value="1"/>
</dbReference>
<dbReference type="HAMAP" id="MF_01080">
    <property type="entry name" value="TruB_bact"/>
    <property type="match status" value="1"/>
</dbReference>
<dbReference type="InterPro" id="IPR020103">
    <property type="entry name" value="PsdUridine_synth_cat_dom_sf"/>
</dbReference>
<dbReference type="InterPro" id="IPR002501">
    <property type="entry name" value="PsdUridine_synth_N"/>
</dbReference>
<dbReference type="InterPro" id="IPR014780">
    <property type="entry name" value="tRNA_psdUridine_synth_TruB"/>
</dbReference>
<dbReference type="InterPro" id="IPR032819">
    <property type="entry name" value="TruB_C"/>
</dbReference>
<dbReference type="NCBIfam" id="TIGR00431">
    <property type="entry name" value="TruB"/>
    <property type="match status" value="1"/>
</dbReference>
<dbReference type="PANTHER" id="PTHR13767:SF2">
    <property type="entry name" value="PSEUDOURIDYLATE SYNTHASE TRUB1"/>
    <property type="match status" value="1"/>
</dbReference>
<dbReference type="PANTHER" id="PTHR13767">
    <property type="entry name" value="TRNA-PSEUDOURIDINE SYNTHASE"/>
    <property type="match status" value="1"/>
</dbReference>
<dbReference type="Pfam" id="PF16198">
    <property type="entry name" value="TruB_C_2"/>
    <property type="match status" value="1"/>
</dbReference>
<dbReference type="Pfam" id="PF01509">
    <property type="entry name" value="TruB_N"/>
    <property type="match status" value="1"/>
</dbReference>
<dbReference type="SUPFAM" id="SSF55120">
    <property type="entry name" value="Pseudouridine synthase"/>
    <property type="match status" value="1"/>
</dbReference>
<name>TRUB_BACTN</name>
<protein>
    <recommendedName>
        <fullName evidence="1">tRNA pseudouridine synthase B</fullName>
        <ecNumber evidence="1">5.4.99.25</ecNumber>
    </recommendedName>
    <alternativeName>
        <fullName evidence="1">tRNA pseudouridine(55) synthase</fullName>
        <shortName evidence="1">Psi55 synthase</shortName>
    </alternativeName>
    <alternativeName>
        <fullName evidence="1">tRNA pseudouridylate synthase</fullName>
    </alternativeName>
    <alternativeName>
        <fullName evidence="1">tRNA-uridine isomerase</fullName>
    </alternativeName>
</protein>
<sequence length="240" mass="27290">MNFKKGEVLFFNKPLGWTSFKVVGHVRYHICRRIGVKKLKVGHAGTLDPLATGVMILCTGKATKRIEEFQYHTKEYVATLRLGATTPSYDLEHEIDATYPTGHITRELVEETLTHFLGAIEQVPPAFSACMVDGKRAYELARKGEEVELKAKQLVIDEIELLECRLDDPEPTIRIRVVCSKGTYIRALARDIGEALQSGAHLTELIRTRVGDVRLEDCLDPEHFKEWIDRQEIENDEDNN</sequence>
<evidence type="ECO:0000255" key="1">
    <source>
        <dbReference type="HAMAP-Rule" id="MF_01080"/>
    </source>
</evidence>
<reference key="1">
    <citation type="journal article" date="2003" name="Science">
        <title>A genomic view of the human-Bacteroides thetaiotaomicron symbiosis.</title>
        <authorList>
            <person name="Xu J."/>
            <person name="Bjursell M.K."/>
            <person name="Himrod J."/>
            <person name="Deng S."/>
            <person name="Carmichael L.K."/>
            <person name="Chiang H.C."/>
            <person name="Hooper L.V."/>
            <person name="Gordon J.I."/>
        </authorList>
    </citation>
    <scope>NUCLEOTIDE SEQUENCE [LARGE SCALE GENOMIC DNA]</scope>
    <source>
        <strain>ATCC 29148 / DSM 2079 / JCM 5827 / CCUG 10774 / NCTC 10582 / VPI-5482 / E50</strain>
    </source>
</reference>
<accession>Q8A2U2</accession>
<feature type="chain" id="PRO_0000121793" description="tRNA pseudouridine synthase B">
    <location>
        <begin position="1"/>
        <end position="240"/>
    </location>
</feature>
<feature type="active site" description="Nucleophile" evidence="1">
    <location>
        <position position="48"/>
    </location>
</feature>
<proteinExistence type="inferred from homology"/>
<organism>
    <name type="scientific">Bacteroides thetaiotaomicron (strain ATCC 29148 / DSM 2079 / JCM 5827 / CCUG 10774 / NCTC 10582 / VPI-5482 / E50)</name>
    <dbReference type="NCBI Taxonomy" id="226186"/>
    <lineage>
        <taxon>Bacteria</taxon>
        <taxon>Pseudomonadati</taxon>
        <taxon>Bacteroidota</taxon>
        <taxon>Bacteroidia</taxon>
        <taxon>Bacteroidales</taxon>
        <taxon>Bacteroidaceae</taxon>
        <taxon>Bacteroides</taxon>
    </lineage>
</organism>
<gene>
    <name evidence="1" type="primary">truB</name>
    <name type="ordered locus">BT_3213</name>
</gene>
<comment type="function">
    <text evidence="1">Responsible for synthesis of pseudouridine from uracil-55 in the psi GC loop of transfer RNAs.</text>
</comment>
<comment type="catalytic activity">
    <reaction evidence="1">
        <text>uridine(55) in tRNA = pseudouridine(55) in tRNA</text>
        <dbReference type="Rhea" id="RHEA:42532"/>
        <dbReference type="Rhea" id="RHEA-COMP:10101"/>
        <dbReference type="Rhea" id="RHEA-COMP:10102"/>
        <dbReference type="ChEBI" id="CHEBI:65314"/>
        <dbReference type="ChEBI" id="CHEBI:65315"/>
        <dbReference type="EC" id="5.4.99.25"/>
    </reaction>
</comment>
<comment type="similarity">
    <text evidence="1">Belongs to the pseudouridine synthase TruB family. Type 1 subfamily.</text>
</comment>
<keyword id="KW-0413">Isomerase</keyword>
<keyword id="KW-1185">Reference proteome</keyword>
<keyword id="KW-0819">tRNA processing</keyword>